<reference key="1">
    <citation type="submission" date="2008-05" db="EMBL/GenBank/DDBJ databases">
        <title>Complete sequence of chromosome of Geobacter lovleyi SZ.</title>
        <authorList>
            <consortium name="US DOE Joint Genome Institute"/>
            <person name="Lucas S."/>
            <person name="Copeland A."/>
            <person name="Lapidus A."/>
            <person name="Glavina del Rio T."/>
            <person name="Dalin E."/>
            <person name="Tice H."/>
            <person name="Bruce D."/>
            <person name="Goodwin L."/>
            <person name="Pitluck S."/>
            <person name="Chertkov O."/>
            <person name="Meincke L."/>
            <person name="Brettin T."/>
            <person name="Detter J.C."/>
            <person name="Han C."/>
            <person name="Tapia R."/>
            <person name="Kuske C.R."/>
            <person name="Schmutz J."/>
            <person name="Larimer F."/>
            <person name="Land M."/>
            <person name="Hauser L."/>
            <person name="Kyrpides N."/>
            <person name="Mikhailova N."/>
            <person name="Sung Y."/>
            <person name="Fletcher K.E."/>
            <person name="Ritalahti K.M."/>
            <person name="Loeffler F.E."/>
            <person name="Richardson P."/>
        </authorList>
    </citation>
    <scope>NUCLEOTIDE SEQUENCE [LARGE SCALE GENOMIC DNA]</scope>
    <source>
        <strain>ATCC BAA-1151 / DSM 17278 / SZ</strain>
    </source>
</reference>
<accession>B3E7S5</accession>
<dbReference type="EMBL" id="CP001089">
    <property type="protein sequence ID" value="ACD95057.1"/>
    <property type="molecule type" value="Genomic_DNA"/>
</dbReference>
<dbReference type="RefSeq" id="WP_012469403.1">
    <property type="nucleotide sequence ID" value="NC_010814.1"/>
</dbReference>
<dbReference type="SMR" id="B3E7S5"/>
<dbReference type="STRING" id="398767.Glov_1336"/>
<dbReference type="KEGG" id="glo:Glov_1336"/>
<dbReference type="eggNOG" id="COG0081">
    <property type="taxonomic scope" value="Bacteria"/>
</dbReference>
<dbReference type="HOGENOM" id="CLU_062853_0_0_7"/>
<dbReference type="OrthoDB" id="9803740at2"/>
<dbReference type="Proteomes" id="UP000002420">
    <property type="component" value="Chromosome"/>
</dbReference>
<dbReference type="GO" id="GO:0022625">
    <property type="term" value="C:cytosolic large ribosomal subunit"/>
    <property type="evidence" value="ECO:0007669"/>
    <property type="project" value="TreeGrafter"/>
</dbReference>
<dbReference type="GO" id="GO:0019843">
    <property type="term" value="F:rRNA binding"/>
    <property type="evidence" value="ECO:0007669"/>
    <property type="project" value="UniProtKB-UniRule"/>
</dbReference>
<dbReference type="GO" id="GO:0003735">
    <property type="term" value="F:structural constituent of ribosome"/>
    <property type="evidence" value="ECO:0007669"/>
    <property type="project" value="InterPro"/>
</dbReference>
<dbReference type="GO" id="GO:0000049">
    <property type="term" value="F:tRNA binding"/>
    <property type="evidence" value="ECO:0007669"/>
    <property type="project" value="UniProtKB-KW"/>
</dbReference>
<dbReference type="GO" id="GO:0006417">
    <property type="term" value="P:regulation of translation"/>
    <property type="evidence" value="ECO:0007669"/>
    <property type="project" value="UniProtKB-KW"/>
</dbReference>
<dbReference type="GO" id="GO:0006412">
    <property type="term" value="P:translation"/>
    <property type="evidence" value="ECO:0007669"/>
    <property type="project" value="UniProtKB-UniRule"/>
</dbReference>
<dbReference type="CDD" id="cd00403">
    <property type="entry name" value="Ribosomal_L1"/>
    <property type="match status" value="1"/>
</dbReference>
<dbReference type="FunFam" id="3.40.50.790:FF:000001">
    <property type="entry name" value="50S ribosomal protein L1"/>
    <property type="match status" value="1"/>
</dbReference>
<dbReference type="Gene3D" id="3.30.190.20">
    <property type="match status" value="1"/>
</dbReference>
<dbReference type="Gene3D" id="3.40.50.790">
    <property type="match status" value="1"/>
</dbReference>
<dbReference type="HAMAP" id="MF_01318_B">
    <property type="entry name" value="Ribosomal_uL1_B"/>
    <property type="match status" value="1"/>
</dbReference>
<dbReference type="InterPro" id="IPR005878">
    <property type="entry name" value="Ribosom_uL1_bac-type"/>
</dbReference>
<dbReference type="InterPro" id="IPR002143">
    <property type="entry name" value="Ribosomal_uL1"/>
</dbReference>
<dbReference type="InterPro" id="IPR023674">
    <property type="entry name" value="Ribosomal_uL1-like"/>
</dbReference>
<dbReference type="InterPro" id="IPR028364">
    <property type="entry name" value="Ribosomal_uL1/biogenesis"/>
</dbReference>
<dbReference type="InterPro" id="IPR016095">
    <property type="entry name" value="Ribosomal_uL1_3-a/b-sand"/>
</dbReference>
<dbReference type="InterPro" id="IPR023673">
    <property type="entry name" value="Ribosomal_uL1_CS"/>
</dbReference>
<dbReference type="NCBIfam" id="TIGR01169">
    <property type="entry name" value="rplA_bact"/>
    <property type="match status" value="1"/>
</dbReference>
<dbReference type="PANTHER" id="PTHR36427">
    <property type="entry name" value="54S RIBOSOMAL PROTEIN L1, MITOCHONDRIAL"/>
    <property type="match status" value="1"/>
</dbReference>
<dbReference type="PANTHER" id="PTHR36427:SF3">
    <property type="entry name" value="LARGE RIBOSOMAL SUBUNIT PROTEIN UL1M"/>
    <property type="match status" value="1"/>
</dbReference>
<dbReference type="Pfam" id="PF00687">
    <property type="entry name" value="Ribosomal_L1"/>
    <property type="match status" value="1"/>
</dbReference>
<dbReference type="PIRSF" id="PIRSF002155">
    <property type="entry name" value="Ribosomal_L1"/>
    <property type="match status" value="1"/>
</dbReference>
<dbReference type="SUPFAM" id="SSF56808">
    <property type="entry name" value="Ribosomal protein L1"/>
    <property type="match status" value="1"/>
</dbReference>
<dbReference type="PROSITE" id="PS01199">
    <property type="entry name" value="RIBOSOMAL_L1"/>
    <property type="match status" value="1"/>
</dbReference>
<comment type="function">
    <text evidence="1">Binds directly to 23S rRNA. The L1 stalk is quite mobile in the ribosome, and is involved in E site tRNA release.</text>
</comment>
<comment type="function">
    <text evidence="1">Protein L1 is also a translational repressor protein, it controls the translation of the L11 operon by binding to its mRNA.</text>
</comment>
<comment type="subunit">
    <text evidence="1">Part of the 50S ribosomal subunit.</text>
</comment>
<comment type="similarity">
    <text evidence="1">Belongs to the universal ribosomal protein uL1 family.</text>
</comment>
<proteinExistence type="inferred from homology"/>
<name>RL1_TRIL1</name>
<feature type="chain" id="PRO_1000141409" description="Large ribosomal subunit protein uL1">
    <location>
        <begin position="1"/>
        <end position="233"/>
    </location>
</feature>
<keyword id="KW-1185">Reference proteome</keyword>
<keyword id="KW-0678">Repressor</keyword>
<keyword id="KW-0687">Ribonucleoprotein</keyword>
<keyword id="KW-0689">Ribosomal protein</keyword>
<keyword id="KW-0694">RNA-binding</keyword>
<keyword id="KW-0699">rRNA-binding</keyword>
<keyword id="KW-0810">Translation regulation</keyword>
<keyword id="KW-0820">tRNA-binding</keyword>
<protein>
    <recommendedName>
        <fullName evidence="1">Large ribosomal subunit protein uL1</fullName>
    </recommendedName>
    <alternativeName>
        <fullName evidence="2">50S ribosomal protein L1</fullName>
    </alternativeName>
</protein>
<gene>
    <name evidence="1" type="primary">rplA</name>
    <name type="ordered locus">Glov_1336</name>
</gene>
<sequence>MSKSTKKHSAAMTKVDRSTVYPLKTAVEVVKDTAYAKFDETVDVAVKLGVDPRHADQMVRGAVVLPNGLGKNVRVLVFAKGEKEKEALDAGADYVGADDLVAKIQEGWFEFDTAIATPDMMGVVGKIGKLLGPRGLMPNPKVGTVTFEVGRAVKESKAGKVEFRVEKAGIVHAPIGKVSFDAEKLQGNLVALVEALVKAKPSAAKGTYIKKISLSSTMGPGINLDISDVTANI</sequence>
<organism>
    <name type="scientific">Trichlorobacter lovleyi (strain ATCC BAA-1151 / DSM 17278 / SZ)</name>
    <name type="common">Geobacter lovleyi</name>
    <dbReference type="NCBI Taxonomy" id="398767"/>
    <lineage>
        <taxon>Bacteria</taxon>
        <taxon>Pseudomonadati</taxon>
        <taxon>Thermodesulfobacteriota</taxon>
        <taxon>Desulfuromonadia</taxon>
        <taxon>Geobacterales</taxon>
        <taxon>Geobacteraceae</taxon>
        <taxon>Trichlorobacter</taxon>
    </lineage>
</organism>
<evidence type="ECO:0000255" key="1">
    <source>
        <dbReference type="HAMAP-Rule" id="MF_01318"/>
    </source>
</evidence>
<evidence type="ECO:0000305" key="2"/>